<reference key="1">
    <citation type="journal article" date="2007" name="Microbiology">
        <title>Comparative analysis of the Corynebacterium glutamicum group and complete genome sequence of strain R.</title>
        <authorList>
            <person name="Yukawa H."/>
            <person name="Omumasaba C.A."/>
            <person name="Nonaka H."/>
            <person name="Kos P."/>
            <person name="Okai N."/>
            <person name="Suzuki N."/>
            <person name="Suda M."/>
            <person name="Tsuge Y."/>
            <person name="Watanabe J."/>
            <person name="Ikeda Y."/>
            <person name="Vertes A.A."/>
            <person name="Inui M."/>
        </authorList>
    </citation>
    <scope>NUCLEOTIDE SEQUENCE [LARGE SCALE GENOMIC DNA]</scope>
    <source>
        <strain>R</strain>
    </source>
</reference>
<accession>A4QGM5</accession>
<protein>
    <recommendedName>
        <fullName evidence="1">Oligoribonuclease</fullName>
        <ecNumber evidence="1">3.1.15.-</ecNumber>
    </recommendedName>
</protein>
<gene>
    <name evidence="1" type="primary">orn</name>
    <name type="ordered locus">cgR_2384</name>
</gene>
<keyword id="KW-0963">Cytoplasm</keyword>
<keyword id="KW-0269">Exonuclease</keyword>
<keyword id="KW-0378">Hydrolase</keyword>
<keyword id="KW-0540">Nuclease</keyword>
<evidence type="ECO:0000255" key="1">
    <source>
        <dbReference type="HAMAP-Rule" id="MF_00045"/>
    </source>
</evidence>
<dbReference type="EC" id="3.1.15.-" evidence="1"/>
<dbReference type="EMBL" id="AP009044">
    <property type="protein sequence ID" value="BAF55391.1"/>
    <property type="molecule type" value="Genomic_DNA"/>
</dbReference>
<dbReference type="RefSeq" id="WP_003860849.1">
    <property type="nucleotide sequence ID" value="NC_009342.1"/>
</dbReference>
<dbReference type="SMR" id="A4QGM5"/>
<dbReference type="KEGG" id="cgt:cgR_2384"/>
<dbReference type="HOGENOM" id="CLU_064761_3_0_11"/>
<dbReference type="PhylomeDB" id="A4QGM5"/>
<dbReference type="Proteomes" id="UP000006698">
    <property type="component" value="Chromosome"/>
</dbReference>
<dbReference type="GO" id="GO:0005737">
    <property type="term" value="C:cytoplasm"/>
    <property type="evidence" value="ECO:0007669"/>
    <property type="project" value="UniProtKB-SubCell"/>
</dbReference>
<dbReference type="GO" id="GO:0000175">
    <property type="term" value="F:3'-5'-RNA exonuclease activity"/>
    <property type="evidence" value="ECO:0007669"/>
    <property type="project" value="InterPro"/>
</dbReference>
<dbReference type="GO" id="GO:0003676">
    <property type="term" value="F:nucleic acid binding"/>
    <property type="evidence" value="ECO:0007669"/>
    <property type="project" value="InterPro"/>
</dbReference>
<dbReference type="CDD" id="cd06135">
    <property type="entry name" value="Orn"/>
    <property type="match status" value="1"/>
</dbReference>
<dbReference type="FunFam" id="3.30.420.10:FF:000003">
    <property type="entry name" value="Oligoribonuclease"/>
    <property type="match status" value="1"/>
</dbReference>
<dbReference type="Gene3D" id="3.30.420.10">
    <property type="entry name" value="Ribonuclease H-like superfamily/Ribonuclease H"/>
    <property type="match status" value="1"/>
</dbReference>
<dbReference type="HAMAP" id="MF_00045">
    <property type="entry name" value="Oligoribonuclease"/>
    <property type="match status" value="1"/>
</dbReference>
<dbReference type="InterPro" id="IPR013520">
    <property type="entry name" value="Exonuclease_RNaseT/DNA_pol3"/>
</dbReference>
<dbReference type="InterPro" id="IPR022894">
    <property type="entry name" value="Oligoribonuclease"/>
</dbReference>
<dbReference type="InterPro" id="IPR012337">
    <property type="entry name" value="RNaseH-like_sf"/>
</dbReference>
<dbReference type="InterPro" id="IPR036397">
    <property type="entry name" value="RNaseH_sf"/>
</dbReference>
<dbReference type="NCBIfam" id="NF003765">
    <property type="entry name" value="PRK05359.1"/>
    <property type="match status" value="1"/>
</dbReference>
<dbReference type="PANTHER" id="PTHR11046">
    <property type="entry name" value="OLIGORIBONUCLEASE, MITOCHONDRIAL"/>
    <property type="match status" value="1"/>
</dbReference>
<dbReference type="PANTHER" id="PTHR11046:SF0">
    <property type="entry name" value="OLIGORIBONUCLEASE, MITOCHONDRIAL"/>
    <property type="match status" value="1"/>
</dbReference>
<dbReference type="Pfam" id="PF00929">
    <property type="entry name" value="RNase_T"/>
    <property type="match status" value="1"/>
</dbReference>
<dbReference type="SMART" id="SM00479">
    <property type="entry name" value="EXOIII"/>
    <property type="match status" value="1"/>
</dbReference>
<dbReference type="SUPFAM" id="SSF53098">
    <property type="entry name" value="Ribonuclease H-like"/>
    <property type="match status" value="1"/>
</dbReference>
<organism>
    <name type="scientific">Corynebacterium glutamicum (strain R)</name>
    <dbReference type="NCBI Taxonomy" id="340322"/>
    <lineage>
        <taxon>Bacteria</taxon>
        <taxon>Bacillati</taxon>
        <taxon>Actinomycetota</taxon>
        <taxon>Actinomycetes</taxon>
        <taxon>Mycobacteriales</taxon>
        <taxon>Corynebacteriaceae</taxon>
        <taxon>Corynebacterium</taxon>
    </lineage>
</organism>
<feature type="chain" id="PRO_1000004245" description="Oligoribonuclease">
    <location>
        <begin position="1"/>
        <end position="219"/>
    </location>
</feature>
<feature type="domain" description="Exonuclease" evidence="1">
    <location>
        <begin position="19"/>
        <end position="184"/>
    </location>
</feature>
<feature type="active site" evidence="1">
    <location>
        <position position="141"/>
    </location>
</feature>
<name>ORN_CORGB</name>
<sequence>MSESENNTTPAVAARDDRLVWVDLEMTGLDLKRHVIVEVAALVTDANLNVLGEGVDLVVHATEEELAQMDDFVTNMHESSGLTEQIRESAVTLKEAEDAVLALIEKHCDPAHPAPLAGNSIATDRAFIREQMPRLDEALHYRMVDVSSVKELARRWYPRVYYKQPEKGLAHRALADIVESIRELDYYRRSFFVAEPGPTSEQCADDAQAAVDRFAPYFD</sequence>
<comment type="function">
    <text evidence="1">3'-to-5' exoribonuclease specific for small oligoribonucleotides.</text>
</comment>
<comment type="subcellular location">
    <subcellularLocation>
        <location evidence="1">Cytoplasm</location>
    </subcellularLocation>
</comment>
<comment type="similarity">
    <text evidence="1">Belongs to the oligoribonuclease family.</text>
</comment>
<proteinExistence type="inferred from homology"/>